<gene>
    <name type="ordered locus">Rcas_4347</name>
</gene>
<organism>
    <name type="scientific">Roseiflexus castenholzii (strain DSM 13941 / HLO8)</name>
    <dbReference type="NCBI Taxonomy" id="383372"/>
    <lineage>
        <taxon>Bacteria</taxon>
        <taxon>Bacillati</taxon>
        <taxon>Chloroflexota</taxon>
        <taxon>Chloroflexia</taxon>
        <taxon>Chloroflexales</taxon>
        <taxon>Roseiflexineae</taxon>
        <taxon>Roseiflexaceae</taxon>
        <taxon>Roseiflexus</taxon>
    </lineage>
</organism>
<name>PHS_ROSCS</name>
<protein>
    <recommendedName>
        <fullName evidence="1">Putative pterin-4-alpha-carbinolamine dehydratase</fullName>
        <shortName evidence="1">PHS</shortName>
        <ecNumber evidence="1">4.2.1.96</ecNumber>
    </recommendedName>
    <alternativeName>
        <fullName evidence="1">4-alpha-hydroxy-tetrahydropterin dehydratase</fullName>
    </alternativeName>
    <alternativeName>
        <fullName evidence="1">Pterin carbinolamine dehydratase</fullName>
        <shortName evidence="1">PCD</shortName>
    </alternativeName>
</protein>
<evidence type="ECO:0000255" key="1">
    <source>
        <dbReference type="HAMAP-Rule" id="MF_00434"/>
    </source>
</evidence>
<proteinExistence type="inferred from homology"/>
<sequence>MAALLNDAEIEERLGDLTGWTRQGNEIRKTFQLPSFPSAIAFVVNVAFLAEAAGHHPDIDIRWRKVTLSLSTHDAGGLTGKDFDLAAQIDEII</sequence>
<reference key="1">
    <citation type="submission" date="2007-08" db="EMBL/GenBank/DDBJ databases">
        <title>Complete sequence of Roseiflexus castenholzii DSM 13941.</title>
        <authorList>
            <consortium name="US DOE Joint Genome Institute"/>
            <person name="Copeland A."/>
            <person name="Lucas S."/>
            <person name="Lapidus A."/>
            <person name="Barry K."/>
            <person name="Glavina del Rio T."/>
            <person name="Dalin E."/>
            <person name="Tice H."/>
            <person name="Pitluck S."/>
            <person name="Thompson L.S."/>
            <person name="Brettin T."/>
            <person name="Bruce D."/>
            <person name="Detter J.C."/>
            <person name="Han C."/>
            <person name="Tapia R."/>
            <person name="Schmutz J."/>
            <person name="Larimer F."/>
            <person name="Land M."/>
            <person name="Hauser L."/>
            <person name="Kyrpides N."/>
            <person name="Mikhailova N."/>
            <person name="Bryant D.A."/>
            <person name="Hanada S."/>
            <person name="Tsukatani Y."/>
            <person name="Richardson P."/>
        </authorList>
    </citation>
    <scope>NUCLEOTIDE SEQUENCE [LARGE SCALE GENOMIC DNA]</scope>
    <source>
        <strain>DSM 13941 / HLO8</strain>
    </source>
</reference>
<feature type="chain" id="PRO_1000192933" description="Putative pterin-4-alpha-carbinolamine dehydratase">
    <location>
        <begin position="1"/>
        <end position="93"/>
    </location>
</feature>
<accession>A7NS25</accession>
<dbReference type="EC" id="4.2.1.96" evidence="1"/>
<dbReference type="EMBL" id="CP000804">
    <property type="protein sequence ID" value="ABU60371.1"/>
    <property type="molecule type" value="Genomic_DNA"/>
</dbReference>
<dbReference type="RefSeq" id="WP_012122792.1">
    <property type="nucleotide sequence ID" value="NC_009767.1"/>
</dbReference>
<dbReference type="SMR" id="A7NS25"/>
<dbReference type="STRING" id="383372.Rcas_4347"/>
<dbReference type="KEGG" id="rca:Rcas_4347"/>
<dbReference type="eggNOG" id="COG2154">
    <property type="taxonomic scope" value="Bacteria"/>
</dbReference>
<dbReference type="HOGENOM" id="CLU_081974_4_3_0"/>
<dbReference type="OrthoDB" id="9800108at2"/>
<dbReference type="Proteomes" id="UP000000263">
    <property type="component" value="Chromosome"/>
</dbReference>
<dbReference type="GO" id="GO:0008124">
    <property type="term" value="F:4-alpha-hydroxytetrahydrobiopterin dehydratase activity"/>
    <property type="evidence" value="ECO:0007669"/>
    <property type="project" value="UniProtKB-UniRule"/>
</dbReference>
<dbReference type="GO" id="GO:0006729">
    <property type="term" value="P:tetrahydrobiopterin biosynthetic process"/>
    <property type="evidence" value="ECO:0007669"/>
    <property type="project" value="InterPro"/>
</dbReference>
<dbReference type="CDD" id="cd00488">
    <property type="entry name" value="PCD_DCoH"/>
    <property type="match status" value="1"/>
</dbReference>
<dbReference type="Gene3D" id="3.30.1360.20">
    <property type="entry name" value="Transcriptional coactivator/pterin dehydratase"/>
    <property type="match status" value="1"/>
</dbReference>
<dbReference type="HAMAP" id="MF_00434">
    <property type="entry name" value="Pterin_4_alpha"/>
    <property type="match status" value="1"/>
</dbReference>
<dbReference type="InterPro" id="IPR036428">
    <property type="entry name" value="PCD_sf"/>
</dbReference>
<dbReference type="InterPro" id="IPR001533">
    <property type="entry name" value="Pterin_deHydtase"/>
</dbReference>
<dbReference type="NCBIfam" id="NF002017">
    <property type="entry name" value="PRK00823.1-2"/>
    <property type="match status" value="1"/>
</dbReference>
<dbReference type="PANTHER" id="PTHR12599">
    <property type="entry name" value="PTERIN-4-ALPHA-CARBINOLAMINE DEHYDRATASE"/>
    <property type="match status" value="1"/>
</dbReference>
<dbReference type="PANTHER" id="PTHR12599:SF0">
    <property type="entry name" value="PTERIN-4-ALPHA-CARBINOLAMINE DEHYDRATASE"/>
    <property type="match status" value="1"/>
</dbReference>
<dbReference type="Pfam" id="PF01329">
    <property type="entry name" value="Pterin_4a"/>
    <property type="match status" value="1"/>
</dbReference>
<dbReference type="SUPFAM" id="SSF55248">
    <property type="entry name" value="PCD-like"/>
    <property type="match status" value="1"/>
</dbReference>
<keyword id="KW-0456">Lyase</keyword>
<keyword id="KW-1185">Reference proteome</keyword>
<comment type="catalytic activity">
    <reaction evidence="1">
        <text>(4aS,6R)-4a-hydroxy-L-erythro-5,6,7,8-tetrahydrobiopterin = (6R)-L-erythro-6,7-dihydrobiopterin + H2O</text>
        <dbReference type="Rhea" id="RHEA:11920"/>
        <dbReference type="ChEBI" id="CHEBI:15377"/>
        <dbReference type="ChEBI" id="CHEBI:15642"/>
        <dbReference type="ChEBI" id="CHEBI:43120"/>
        <dbReference type="EC" id="4.2.1.96"/>
    </reaction>
</comment>
<comment type="similarity">
    <text evidence="1">Belongs to the pterin-4-alpha-carbinolamine dehydratase family.</text>
</comment>